<feature type="chain" id="PRO_0000412052" description="CASP-like protein 2U3">
    <location>
        <begin position="1"/>
        <end position="191"/>
    </location>
</feature>
<feature type="topological domain" description="Cytoplasmic" evidence="2">
    <location>
        <begin position="1"/>
        <end position="25"/>
    </location>
</feature>
<feature type="transmembrane region" description="Helical" evidence="2">
    <location>
        <begin position="26"/>
        <end position="46"/>
    </location>
</feature>
<feature type="topological domain" description="Extracellular" evidence="2">
    <location>
        <begin position="47"/>
        <end position="68"/>
    </location>
</feature>
<feature type="transmembrane region" description="Helical" evidence="2">
    <location>
        <begin position="69"/>
        <end position="89"/>
    </location>
</feature>
<feature type="topological domain" description="Cytoplasmic" evidence="2">
    <location>
        <begin position="90"/>
        <end position="114"/>
    </location>
</feature>
<feature type="transmembrane region" description="Helical" evidence="2">
    <location>
        <begin position="115"/>
        <end position="135"/>
    </location>
</feature>
<feature type="topological domain" description="Extracellular" evidence="2">
    <location>
        <begin position="136"/>
        <end position="157"/>
    </location>
</feature>
<feature type="transmembrane region" description="Helical" evidence="2">
    <location>
        <begin position="158"/>
        <end position="178"/>
    </location>
</feature>
<feature type="topological domain" description="Cytoplasmic" evidence="2">
    <location>
        <begin position="179"/>
        <end position="191"/>
    </location>
</feature>
<feature type="glycosylation site" description="N-linked (GlcNAc...) asparagine" evidence="2">
    <location>
        <position position="137"/>
    </location>
</feature>
<proteinExistence type="evidence at transcript level"/>
<protein>
    <recommendedName>
        <fullName>CASP-like protein 2U3</fullName>
        <shortName>SmCASPL2U3</shortName>
    </recommendedName>
</protein>
<name>CSPL5_SELML</name>
<organism>
    <name type="scientific">Selaginella moellendorffii</name>
    <name type="common">Spikemoss</name>
    <dbReference type="NCBI Taxonomy" id="88036"/>
    <lineage>
        <taxon>Eukaryota</taxon>
        <taxon>Viridiplantae</taxon>
        <taxon>Streptophyta</taxon>
        <taxon>Embryophyta</taxon>
        <taxon>Tracheophyta</taxon>
        <taxon>Lycopodiopsida</taxon>
        <taxon>Selaginellales</taxon>
        <taxon>Selaginellaceae</taxon>
        <taxon>Selaginella</taxon>
    </lineage>
</organism>
<accession>D8QNV6</accession>
<dbReference type="EMBL" id="GL377565">
    <property type="protein sequence ID" value="EFJ38176.1"/>
    <property type="status" value="ALT_SEQ"/>
    <property type="molecule type" value="Genomic_DNA"/>
</dbReference>
<dbReference type="EMBL" id="FE480096">
    <property type="status" value="NOT_ANNOTATED_CDS"/>
    <property type="molecule type" value="mRNA"/>
</dbReference>
<dbReference type="RefSeq" id="XP_002960637.1">
    <property type="nucleotide sequence ID" value="XM_002960591.1"/>
</dbReference>
<dbReference type="KEGG" id="smo:SELMODRAFT_75865"/>
<dbReference type="HOGENOM" id="CLU_066104_2_3_1"/>
<dbReference type="InParanoid" id="D8QNV6"/>
<dbReference type="OrthoDB" id="749363at2759"/>
<dbReference type="Proteomes" id="UP000001514">
    <property type="component" value="Unassembled WGS sequence"/>
</dbReference>
<dbReference type="GO" id="GO:0005886">
    <property type="term" value="C:plasma membrane"/>
    <property type="evidence" value="ECO:0007669"/>
    <property type="project" value="UniProtKB-SubCell"/>
</dbReference>
<dbReference type="InterPro" id="IPR006459">
    <property type="entry name" value="CASP/CASPL"/>
</dbReference>
<dbReference type="InterPro" id="IPR006702">
    <property type="entry name" value="CASP_dom"/>
</dbReference>
<dbReference type="NCBIfam" id="TIGR01569">
    <property type="entry name" value="A_tha_TIGR01569"/>
    <property type="match status" value="1"/>
</dbReference>
<dbReference type="PANTHER" id="PTHR33573:SF30">
    <property type="entry name" value="CASP-LIKE PROTEIN 2C1-RELATED"/>
    <property type="match status" value="1"/>
</dbReference>
<dbReference type="PANTHER" id="PTHR33573">
    <property type="entry name" value="CASP-LIKE PROTEIN 4A4"/>
    <property type="match status" value="1"/>
</dbReference>
<dbReference type="Pfam" id="PF04535">
    <property type="entry name" value="CASP_dom"/>
    <property type="match status" value="1"/>
</dbReference>
<evidence type="ECO:0000250" key="1"/>
<evidence type="ECO:0000255" key="2"/>
<evidence type="ECO:0000305" key="3"/>
<reference key="1">
    <citation type="journal article" date="2011" name="Science">
        <title>The Selaginella genome identifies genetic changes associated with the evolution of vascular plants.</title>
        <authorList>
            <person name="Banks J.A."/>
            <person name="Nishiyama T."/>
            <person name="Hasebe M."/>
            <person name="Bowman J.L."/>
            <person name="Gribskov M."/>
            <person name="dePamphilis C."/>
            <person name="Albert V.A."/>
            <person name="Aono N."/>
            <person name="Aoyama T."/>
            <person name="Ambrose B.A."/>
            <person name="Ashton N.W."/>
            <person name="Axtell M.J."/>
            <person name="Barker E."/>
            <person name="Barker M.S."/>
            <person name="Bennetzen J.L."/>
            <person name="Bonawitz N.D."/>
            <person name="Chapple C."/>
            <person name="Cheng C."/>
            <person name="Correa L.G."/>
            <person name="Dacre M."/>
            <person name="DeBarry J."/>
            <person name="Dreyer I."/>
            <person name="Elias M."/>
            <person name="Engstrom E.M."/>
            <person name="Estelle M."/>
            <person name="Feng L."/>
            <person name="Finet C."/>
            <person name="Floyd S.K."/>
            <person name="Frommer W.B."/>
            <person name="Fujita T."/>
            <person name="Gramzow L."/>
            <person name="Gutensohn M."/>
            <person name="Harholt J."/>
            <person name="Hattori M."/>
            <person name="Heyl A."/>
            <person name="Hirai T."/>
            <person name="Hiwatashi Y."/>
            <person name="Ishikawa M."/>
            <person name="Iwata M."/>
            <person name="Karol K.G."/>
            <person name="Koehler B."/>
            <person name="Kolukisaoglu U."/>
            <person name="Kubo M."/>
            <person name="Kurata T."/>
            <person name="Lalonde S."/>
            <person name="Li K."/>
            <person name="Li Y."/>
            <person name="Litt A."/>
            <person name="Lyons E."/>
            <person name="Manning G."/>
            <person name="Maruyama T."/>
            <person name="Michael T.P."/>
            <person name="Mikami K."/>
            <person name="Miyazaki S."/>
            <person name="Morinaga S."/>
            <person name="Murata T."/>
            <person name="Mueller-Roeber B."/>
            <person name="Nelson D.R."/>
            <person name="Obara M."/>
            <person name="Oguri Y."/>
            <person name="Olmstead R.G."/>
            <person name="Onodera N."/>
            <person name="Petersen B.L."/>
            <person name="Pils B."/>
            <person name="Prigge M."/>
            <person name="Rensing S.A."/>
            <person name="Riano-Pachon D.M."/>
            <person name="Roberts A.W."/>
            <person name="Sato Y."/>
            <person name="Scheller H.V."/>
            <person name="Schulz B."/>
            <person name="Schulz C."/>
            <person name="Shakirov E.V."/>
            <person name="Shibagaki N."/>
            <person name="Shinohara N."/>
            <person name="Shippen D.E."/>
            <person name="Soerensen I."/>
            <person name="Sotooka R."/>
            <person name="Sugimoto N."/>
            <person name="Sugita M."/>
            <person name="Sumikawa N."/>
            <person name="Tanurdzic M."/>
            <person name="Theissen G."/>
            <person name="Ulvskov P."/>
            <person name="Wakazuki S."/>
            <person name="Weng J.K."/>
            <person name="Willats W.W."/>
            <person name="Wipf D."/>
            <person name="Wolf P.G."/>
            <person name="Yang L."/>
            <person name="Zimmer A.D."/>
            <person name="Zhu Q."/>
            <person name="Mitros T."/>
            <person name="Hellsten U."/>
            <person name="Loque D."/>
            <person name="Otillar R."/>
            <person name="Salamov A."/>
            <person name="Schmutz J."/>
            <person name="Shapiro H."/>
            <person name="Lindquist E."/>
            <person name="Lucas S."/>
            <person name="Rokhsar D."/>
            <person name="Grigoriev I.V."/>
        </authorList>
    </citation>
    <scope>NUCLEOTIDE SEQUENCE [LARGE SCALE GENOMIC DNA]</scope>
</reference>
<reference key="2">
    <citation type="submission" date="2008-03" db="EMBL/GenBank/DDBJ databases">
        <title>DOE Joint Genome Institute Selaginella moellendorffii EST project.</title>
        <authorList>
            <person name="Richardson P."/>
            <person name="Lucas S."/>
            <person name="Rokhsar D."/>
            <person name="Wang M."/>
            <person name="Lindquist E.A."/>
        </authorList>
    </citation>
    <scope>NUCLEOTIDE SEQUENCE [LARGE SCALE MRNA]</scope>
</reference>
<reference key="3">
    <citation type="journal article" date="2014" name="Plant Physiol.">
        <title>Functional and evolutionary analysis of the CASPARIAN STRIP MEMBRANE DOMAIN PROTEIN family.</title>
        <authorList>
            <person name="Roppolo D."/>
            <person name="Boeckmann B."/>
            <person name="Pfister A."/>
            <person name="Boutet E."/>
            <person name="Rubio M.C."/>
            <person name="Denervaud-Tendon V."/>
            <person name="Vermeer J.E."/>
            <person name="Gheyselinck J."/>
            <person name="Xenarios I."/>
            <person name="Geldner N."/>
        </authorList>
    </citation>
    <scope>GENE FAMILY</scope>
    <scope>NOMENCLATURE</scope>
</reference>
<gene>
    <name type="ORF">SELMODRAFT_75865</name>
</gene>
<keyword id="KW-1003">Cell membrane</keyword>
<keyword id="KW-0325">Glycoprotein</keyword>
<keyword id="KW-0472">Membrane</keyword>
<keyword id="KW-1185">Reference proteome</keyword>
<keyword id="KW-0812">Transmembrane</keyword>
<keyword id="KW-1133">Transmembrane helix</keyword>
<comment type="subunit">
    <text evidence="1">Homodimer and heterodimers.</text>
</comment>
<comment type="subcellular location">
    <subcellularLocation>
        <location evidence="1">Cell membrane</location>
        <topology evidence="1">Multi-pass membrane protein</topology>
    </subcellularLocation>
</comment>
<comment type="similarity">
    <text evidence="3">Belongs to the Casparian strip membrane proteins (CASP) family.</text>
</comment>
<comment type="sequence caution" evidence="3">
    <conflict type="erroneous gene model prediction">
        <sequence resource="EMBL-CDS" id="EFJ38176"/>
    </conflict>
</comment>
<sequence length="191" mass="20561">MGAYDGAEAPRAAPASTAANSRPSRLLLLHSLLLRLVAVVVSILVIAVMVHAKQRVMIFKAEWDNSKAFVALVAISAICLGYSFLQFILSAFHLCSKSWKSPTKCWAWMNFIADQILTYAMLGAAAAAAELAYIAKNGSSRAQWQPICSTFNTFCTRAGASIILSFIAVLALANSSAISAYHLFRRPSSSV</sequence>